<organism>
    <name type="scientific">Bos taurus</name>
    <name type="common">Bovine</name>
    <dbReference type="NCBI Taxonomy" id="9913"/>
    <lineage>
        <taxon>Eukaryota</taxon>
        <taxon>Metazoa</taxon>
        <taxon>Chordata</taxon>
        <taxon>Craniata</taxon>
        <taxon>Vertebrata</taxon>
        <taxon>Euteleostomi</taxon>
        <taxon>Mammalia</taxon>
        <taxon>Eutheria</taxon>
        <taxon>Laurasiatheria</taxon>
        <taxon>Artiodactyla</taxon>
        <taxon>Ruminantia</taxon>
        <taxon>Pecora</taxon>
        <taxon>Bovidae</taxon>
        <taxon>Bovinae</taxon>
        <taxon>Bos</taxon>
    </lineage>
</organism>
<protein>
    <recommendedName>
        <fullName>C-C motif chemokine 3</fullName>
    </recommendedName>
    <alternativeName>
        <fullName>Macrophage inflammatory protein 1-alpha</fullName>
        <shortName>MIP-1-alpha</shortName>
    </alternativeName>
    <alternativeName>
        <fullName>Small-inducible cytokine A3</fullName>
    </alternativeName>
</protein>
<comment type="function">
    <text evidence="1">Monokine with inflammatory and chemokinetic properties. Binds to CCR1, CCR4 and CCR5. One of the major HIV-suppressive factors produced by CD8+ T-cells. Recombinant MIP-1-alpha induces a dose-dependent inhibition of different strains of HIV-1, HIV-2, and simian immunodeficiency virus (SIV).</text>
</comment>
<comment type="subunit">
    <text evidence="1">Self-associates. Also heterodimer of MIP-1-alpha(4-69) and MIP-1-beta(3-69). Interacts with CCR1.</text>
</comment>
<comment type="subcellular location">
    <subcellularLocation>
        <location>Secreted</location>
    </subcellularLocation>
</comment>
<comment type="similarity">
    <text evidence="2">Belongs to the intercrine beta (chemokine CC) family.</text>
</comment>
<gene>
    <name type="primary">CCL3</name>
    <name type="synonym">SCYA3</name>
</gene>
<proteinExistence type="inferred from homology"/>
<sequence>MKVAVAALAVLLCAMALCSQVFSAPFGADTPTACCFSYVARQLSRKIVADYFETSSQCSKPGVIFQTKKGRQVCANPTEDWVQEYITDLELNA</sequence>
<reference key="1">
    <citation type="submission" date="2002-01" db="EMBL/GenBank/DDBJ databases">
        <title>Role of chemokines in RSV infection.</title>
        <authorList>
            <person name="Werling D."/>
        </authorList>
    </citation>
    <scope>NUCLEOTIDE SEQUENCE [MRNA]</scope>
</reference>
<feature type="signal peptide" evidence="1">
    <location>
        <begin position="1"/>
        <end position="24"/>
    </location>
</feature>
<feature type="chain" id="PRO_0000005154" description="C-C motif chemokine 3">
    <location>
        <begin position="25"/>
        <end position="93"/>
    </location>
</feature>
<feature type="disulfide bond" evidence="1">
    <location>
        <begin position="34"/>
        <end position="58"/>
    </location>
</feature>
<feature type="disulfide bond" evidence="1">
    <location>
        <begin position="35"/>
        <end position="74"/>
    </location>
</feature>
<name>CCL3_BOVIN</name>
<keyword id="KW-0145">Chemotaxis</keyword>
<keyword id="KW-0202">Cytokine</keyword>
<keyword id="KW-1015">Disulfide bond</keyword>
<keyword id="KW-0395">Inflammatory response</keyword>
<keyword id="KW-1185">Reference proteome</keyword>
<keyword id="KW-0964">Secreted</keyword>
<keyword id="KW-0732">Signal</keyword>
<evidence type="ECO:0000250" key="1">
    <source>
        <dbReference type="UniProtKB" id="P10147"/>
    </source>
</evidence>
<evidence type="ECO:0000305" key="2"/>
<accession>Q8SQA6</accession>
<dbReference type="EMBL" id="AY077840">
    <property type="protein sequence ID" value="AAL78060.1"/>
    <property type="molecule type" value="mRNA"/>
</dbReference>
<dbReference type="RefSeq" id="NP_776936.1">
    <property type="nucleotide sequence ID" value="NM_174511.2"/>
</dbReference>
<dbReference type="SMR" id="Q8SQA6"/>
<dbReference type="FunCoup" id="Q8SQA6">
    <property type="interactions" value="322"/>
</dbReference>
<dbReference type="STRING" id="9913.ENSBTAP00000035305"/>
<dbReference type="PaxDb" id="9913-ENSBTAP00000035305"/>
<dbReference type="GeneID" id="282170"/>
<dbReference type="KEGG" id="bta:282170"/>
<dbReference type="CTD" id="6348"/>
<dbReference type="eggNOG" id="ENOG502SAF0">
    <property type="taxonomic scope" value="Eukaryota"/>
</dbReference>
<dbReference type="InParanoid" id="Q8SQA6"/>
<dbReference type="OrthoDB" id="8934837at2759"/>
<dbReference type="Proteomes" id="UP000009136">
    <property type="component" value="Unplaced"/>
</dbReference>
<dbReference type="GO" id="GO:0005737">
    <property type="term" value="C:cytoplasm"/>
    <property type="evidence" value="ECO:0000250"/>
    <property type="project" value="UniProtKB"/>
</dbReference>
<dbReference type="GO" id="GO:0005829">
    <property type="term" value="C:cytosol"/>
    <property type="evidence" value="ECO:0000250"/>
    <property type="project" value="UniProtKB"/>
</dbReference>
<dbReference type="GO" id="GO:0005615">
    <property type="term" value="C:extracellular space"/>
    <property type="evidence" value="ECO:0000250"/>
    <property type="project" value="UniProtKB"/>
</dbReference>
<dbReference type="GO" id="GO:0048020">
    <property type="term" value="F:CCR chemokine receptor binding"/>
    <property type="evidence" value="ECO:0000318"/>
    <property type="project" value="GO_Central"/>
</dbReference>
<dbReference type="GO" id="GO:0042056">
    <property type="term" value="F:chemoattractant activity"/>
    <property type="evidence" value="ECO:0000250"/>
    <property type="project" value="UniProtKB"/>
</dbReference>
<dbReference type="GO" id="GO:0008009">
    <property type="term" value="F:chemokine activity"/>
    <property type="evidence" value="ECO:0000250"/>
    <property type="project" value="UniProtKB"/>
</dbReference>
<dbReference type="GO" id="GO:0016301">
    <property type="term" value="F:kinase activity"/>
    <property type="evidence" value="ECO:0000250"/>
    <property type="project" value="UniProtKB"/>
</dbReference>
<dbReference type="GO" id="GO:0016004">
    <property type="term" value="F:phospholipase activator activity"/>
    <property type="evidence" value="ECO:0000250"/>
    <property type="project" value="UniProtKB"/>
</dbReference>
<dbReference type="GO" id="GO:0004672">
    <property type="term" value="F:protein kinase activity"/>
    <property type="evidence" value="ECO:0000250"/>
    <property type="project" value="UniProtKB"/>
</dbReference>
<dbReference type="GO" id="GO:0061844">
    <property type="term" value="P:antimicrobial humoral immune response mediated by antimicrobial peptide"/>
    <property type="evidence" value="ECO:0000318"/>
    <property type="project" value="GO_Central"/>
</dbReference>
<dbReference type="GO" id="GO:0043615">
    <property type="term" value="P:astrocyte cell migration"/>
    <property type="evidence" value="ECO:0000250"/>
    <property type="project" value="UniProtKB"/>
</dbReference>
<dbReference type="GO" id="GO:0006816">
    <property type="term" value="P:calcium ion transport"/>
    <property type="evidence" value="ECO:0000250"/>
    <property type="project" value="UniProtKB"/>
</dbReference>
<dbReference type="GO" id="GO:0019722">
    <property type="term" value="P:calcium-mediated signaling"/>
    <property type="evidence" value="ECO:0000250"/>
    <property type="project" value="UniProtKB"/>
</dbReference>
<dbReference type="GO" id="GO:0001775">
    <property type="term" value="P:cell activation"/>
    <property type="evidence" value="ECO:0000250"/>
    <property type="project" value="UniProtKB"/>
</dbReference>
<dbReference type="GO" id="GO:0060326">
    <property type="term" value="P:cell chemotaxis"/>
    <property type="evidence" value="ECO:0000318"/>
    <property type="project" value="GO_Central"/>
</dbReference>
<dbReference type="GO" id="GO:0007267">
    <property type="term" value="P:cell-cell signaling"/>
    <property type="evidence" value="ECO:0000250"/>
    <property type="project" value="UniProtKB"/>
</dbReference>
<dbReference type="GO" id="GO:0070098">
    <property type="term" value="P:chemokine-mediated signaling pathway"/>
    <property type="evidence" value="ECO:0000318"/>
    <property type="project" value="GO_Central"/>
</dbReference>
<dbReference type="GO" id="GO:0006935">
    <property type="term" value="P:chemotaxis"/>
    <property type="evidence" value="ECO:0000250"/>
    <property type="project" value="UniProtKB"/>
</dbReference>
<dbReference type="GO" id="GO:0007010">
    <property type="term" value="P:cytoskeleton organization"/>
    <property type="evidence" value="ECO:0000250"/>
    <property type="project" value="UniProtKB"/>
</dbReference>
<dbReference type="GO" id="GO:0048245">
    <property type="term" value="P:eosinophil chemotaxis"/>
    <property type="evidence" value="ECO:0000250"/>
    <property type="project" value="UniProtKB"/>
</dbReference>
<dbReference type="GO" id="GO:0043308">
    <property type="term" value="P:eosinophil degranulation"/>
    <property type="evidence" value="ECO:0000250"/>
    <property type="project" value="UniProtKB"/>
</dbReference>
<dbReference type="GO" id="GO:0006887">
    <property type="term" value="P:exocytosis"/>
    <property type="evidence" value="ECO:0000250"/>
    <property type="project" value="UniProtKB"/>
</dbReference>
<dbReference type="GO" id="GO:0071621">
    <property type="term" value="P:granulocyte chemotaxis"/>
    <property type="evidence" value="ECO:0000250"/>
    <property type="project" value="UniProtKB"/>
</dbReference>
<dbReference type="GO" id="GO:0006954">
    <property type="term" value="P:inflammatory response"/>
    <property type="evidence" value="ECO:0000250"/>
    <property type="project" value="UniProtKB"/>
</dbReference>
<dbReference type="GO" id="GO:0006874">
    <property type="term" value="P:intracellular calcium ion homeostasis"/>
    <property type="evidence" value="ECO:0000250"/>
    <property type="project" value="UniProtKB"/>
</dbReference>
<dbReference type="GO" id="GO:0048247">
    <property type="term" value="P:lymphocyte chemotaxis"/>
    <property type="evidence" value="ECO:0000250"/>
    <property type="project" value="UniProtKB"/>
</dbReference>
<dbReference type="GO" id="GO:0048246">
    <property type="term" value="P:macrophage chemotaxis"/>
    <property type="evidence" value="ECO:0000250"/>
    <property type="project" value="UniProtKB"/>
</dbReference>
<dbReference type="GO" id="GO:0002548">
    <property type="term" value="P:monocyte chemotaxis"/>
    <property type="evidence" value="ECO:0000250"/>
    <property type="project" value="UniProtKB"/>
</dbReference>
<dbReference type="GO" id="GO:0043922">
    <property type="term" value="P:negative regulation by host of viral transcription"/>
    <property type="evidence" value="ECO:0000250"/>
    <property type="project" value="UniProtKB"/>
</dbReference>
<dbReference type="GO" id="GO:0010629">
    <property type="term" value="P:negative regulation of gene expression"/>
    <property type="evidence" value="ECO:0000250"/>
    <property type="project" value="UniProtKB"/>
</dbReference>
<dbReference type="GO" id="GO:0045671">
    <property type="term" value="P:negative regulation of osteoclast differentiation"/>
    <property type="evidence" value="ECO:0000250"/>
    <property type="project" value="UniProtKB"/>
</dbReference>
<dbReference type="GO" id="GO:0030593">
    <property type="term" value="P:neutrophil chemotaxis"/>
    <property type="evidence" value="ECO:0000250"/>
    <property type="project" value="UniProtKB"/>
</dbReference>
<dbReference type="GO" id="GO:0001649">
    <property type="term" value="P:osteoblast differentiation"/>
    <property type="evidence" value="ECO:0000250"/>
    <property type="project" value="UniProtKB"/>
</dbReference>
<dbReference type="GO" id="GO:0051928">
    <property type="term" value="P:positive regulation of calcium ion transport"/>
    <property type="evidence" value="ECO:0000250"/>
    <property type="project" value="UniProtKB"/>
</dbReference>
<dbReference type="GO" id="GO:0050850">
    <property type="term" value="P:positive regulation of calcium-mediated signaling"/>
    <property type="evidence" value="ECO:0000250"/>
    <property type="project" value="UniProtKB"/>
</dbReference>
<dbReference type="GO" id="GO:0030335">
    <property type="term" value="P:positive regulation of cell migration"/>
    <property type="evidence" value="ECO:0000250"/>
    <property type="project" value="UniProtKB"/>
</dbReference>
<dbReference type="GO" id="GO:0070374">
    <property type="term" value="P:positive regulation of ERK1 and ERK2 cascade"/>
    <property type="evidence" value="ECO:0000250"/>
    <property type="project" value="UniProtKB"/>
</dbReference>
<dbReference type="GO" id="GO:0010628">
    <property type="term" value="P:positive regulation of gene expression"/>
    <property type="evidence" value="ECO:0000250"/>
    <property type="project" value="UniProtKB"/>
</dbReference>
<dbReference type="GO" id="GO:0050729">
    <property type="term" value="P:positive regulation of inflammatory response"/>
    <property type="evidence" value="ECO:0000250"/>
    <property type="project" value="UniProtKB"/>
</dbReference>
<dbReference type="GO" id="GO:0032731">
    <property type="term" value="P:positive regulation of interleukin-1 beta production"/>
    <property type="evidence" value="ECO:0000250"/>
    <property type="project" value="UniProtKB"/>
</dbReference>
<dbReference type="GO" id="GO:2000503">
    <property type="term" value="P:positive regulation of natural killer cell chemotaxis"/>
    <property type="evidence" value="ECO:0000250"/>
    <property type="project" value="UniProtKB"/>
</dbReference>
<dbReference type="GO" id="GO:0043525">
    <property type="term" value="P:positive regulation of neuron apoptotic process"/>
    <property type="evidence" value="ECO:0000250"/>
    <property type="project" value="UniProtKB"/>
</dbReference>
<dbReference type="GO" id="GO:0032760">
    <property type="term" value="P:positive regulation of tumor necrosis factor production"/>
    <property type="evidence" value="ECO:0000250"/>
    <property type="project" value="UniProtKB"/>
</dbReference>
<dbReference type="GO" id="GO:0050795">
    <property type="term" value="P:regulation of behavior"/>
    <property type="evidence" value="ECO:0000250"/>
    <property type="project" value="UniProtKB"/>
</dbReference>
<dbReference type="GO" id="GO:0008360">
    <property type="term" value="P:regulation of cell shape"/>
    <property type="evidence" value="ECO:0000250"/>
    <property type="project" value="UniProtKB"/>
</dbReference>
<dbReference type="GO" id="GO:0051930">
    <property type="term" value="P:regulation of sensory perception of pain"/>
    <property type="evidence" value="ECO:0000250"/>
    <property type="project" value="UniProtKB"/>
</dbReference>
<dbReference type="GO" id="GO:0014808">
    <property type="term" value="P:release of sequestered calcium ion into cytosol by sarcoplasmic reticulum"/>
    <property type="evidence" value="ECO:0000250"/>
    <property type="project" value="UniProtKB"/>
</dbReference>
<dbReference type="GO" id="GO:0070723">
    <property type="term" value="P:response to cholesterol"/>
    <property type="evidence" value="ECO:0000250"/>
    <property type="project" value="UniProtKB"/>
</dbReference>
<dbReference type="GO" id="GO:0009636">
    <property type="term" value="P:response to toxic substance"/>
    <property type="evidence" value="ECO:0000250"/>
    <property type="project" value="UniProtKB"/>
</dbReference>
<dbReference type="GO" id="GO:0023052">
    <property type="term" value="P:signaling"/>
    <property type="evidence" value="ECO:0000250"/>
    <property type="project" value="UniProtKB"/>
</dbReference>
<dbReference type="GO" id="GO:0010818">
    <property type="term" value="P:T cell chemotaxis"/>
    <property type="evidence" value="ECO:0000250"/>
    <property type="project" value="UniProtKB"/>
</dbReference>
<dbReference type="CDD" id="cd00272">
    <property type="entry name" value="Chemokine_CC"/>
    <property type="match status" value="1"/>
</dbReference>
<dbReference type="FunFam" id="2.40.50.40:FF:000002">
    <property type="entry name" value="C-C motif chemokine"/>
    <property type="match status" value="1"/>
</dbReference>
<dbReference type="Gene3D" id="2.40.50.40">
    <property type="match status" value="1"/>
</dbReference>
<dbReference type="InterPro" id="IPR039809">
    <property type="entry name" value="Chemokine_b/g/d"/>
</dbReference>
<dbReference type="InterPro" id="IPR000827">
    <property type="entry name" value="Chemokine_CC_CS"/>
</dbReference>
<dbReference type="InterPro" id="IPR001811">
    <property type="entry name" value="Chemokine_IL8-like_dom"/>
</dbReference>
<dbReference type="InterPro" id="IPR036048">
    <property type="entry name" value="Interleukin_8-like_sf"/>
</dbReference>
<dbReference type="PANTHER" id="PTHR12015:SF183">
    <property type="entry name" value="C-C MOTIF CHEMOKINE 3"/>
    <property type="match status" value="1"/>
</dbReference>
<dbReference type="PANTHER" id="PTHR12015">
    <property type="entry name" value="SMALL INDUCIBLE CYTOKINE A"/>
    <property type="match status" value="1"/>
</dbReference>
<dbReference type="Pfam" id="PF00048">
    <property type="entry name" value="IL8"/>
    <property type="match status" value="1"/>
</dbReference>
<dbReference type="SMART" id="SM00199">
    <property type="entry name" value="SCY"/>
    <property type="match status" value="1"/>
</dbReference>
<dbReference type="SUPFAM" id="SSF54117">
    <property type="entry name" value="Interleukin 8-like chemokines"/>
    <property type="match status" value="1"/>
</dbReference>
<dbReference type="PROSITE" id="PS00472">
    <property type="entry name" value="SMALL_CYTOKINES_CC"/>
    <property type="match status" value="1"/>
</dbReference>